<evidence type="ECO:0000255" key="1">
    <source>
        <dbReference type="HAMAP-Rule" id="MF_00406"/>
    </source>
</evidence>
<sequence>MMDIREIQAALPHRYPMLLVDRVLEVSDDHIVAIKNVTINEPFFNGHFPHYPVMPGVLIMEALAQTAGVLELSKEENKGKLVFYAGMDKVKFKKQVVPGDQLVMTATFIKRRGTIAVVEARAEVDGKLAASGTLTFACGQ</sequence>
<organism>
    <name type="scientific">Streptococcus pyogenes serotype M49 (strain NZ131)</name>
    <dbReference type="NCBI Taxonomy" id="471876"/>
    <lineage>
        <taxon>Bacteria</taxon>
        <taxon>Bacillati</taxon>
        <taxon>Bacillota</taxon>
        <taxon>Bacilli</taxon>
        <taxon>Lactobacillales</taxon>
        <taxon>Streptococcaceae</taxon>
        <taxon>Streptococcus</taxon>
    </lineage>
</organism>
<proteinExistence type="inferred from homology"/>
<comment type="function">
    <text evidence="1">Involved in unsaturated fatty acids biosynthesis. Catalyzes the dehydration of short chain beta-hydroxyacyl-ACPs and long chain saturated and unsaturated beta-hydroxyacyl-ACPs.</text>
</comment>
<comment type="catalytic activity">
    <reaction evidence="1">
        <text>a (3R)-hydroxyacyl-[ACP] = a (2E)-enoyl-[ACP] + H2O</text>
        <dbReference type="Rhea" id="RHEA:13097"/>
        <dbReference type="Rhea" id="RHEA-COMP:9925"/>
        <dbReference type="Rhea" id="RHEA-COMP:9945"/>
        <dbReference type="ChEBI" id="CHEBI:15377"/>
        <dbReference type="ChEBI" id="CHEBI:78784"/>
        <dbReference type="ChEBI" id="CHEBI:78827"/>
        <dbReference type="EC" id="4.2.1.59"/>
    </reaction>
</comment>
<comment type="subcellular location">
    <subcellularLocation>
        <location evidence="1">Cytoplasm</location>
    </subcellularLocation>
</comment>
<comment type="similarity">
    <text evidence="1">Belongs to the thioester dehydratase family. FabZ subfamily.</text>
</comment>
<keyword id="KW-0963">Cytoplasm</keyword>
<keyword id="KW-0441">Lipid A biosynthesis</keyword>
<keyword id="KW-0444">Lipid biosynthesis</keyword>
<keyword id="KW-0443">Lipid metabolism</keyword>
<keyword id="KW-0456">Lyase</keyword>
<dbReference type="EC" id="4.2.1.59" evidence="1"/>
<dbReference type="EMBL" id="CP000829">
    <property type="protein sequence ID" value="ACI61640.1"/>
    <property type="molecule type" value="Genomic_DNA"/>
</dbReference>
<dbReference type="SMR" id="B5XHX8"/>
<dbReference type="KEGG" id="soz:Spy49_1362c"/>
<dbReference type="HOGENOM" id="CLU_078912_1_2_9"/>
<dbReference type="Proteomes" id="UP000001039">
    <property type="component" value="Chromosome"/>
</dbReference>
<dbReference type="GO" id="GO:0005737">
    <property type="term" value="C:cytoplasm"/>
    <property type="evidence" value="ECO:0007669"/>
    <property type="project" value="UniProtKB-SubCell"/>
</dbReference>
<dbReference type="GO" id="GO:0016020">
    <property type="term" value="C:membrane"/>
    <property type="evidence" value="ECO:0007669"/>
    <property type="project" value="GOC"/>
</dbReference>
<dbReference type="GO" id="GO:0019171">
    <property type="term" value="F:(3R)-hydroxyacyl-[acyl-carrier-protein] dehydratase activity"/>
    <property type="evidence" value="ECO:0007669"/>
    <property type="project" value="UniProtKB-EC"/>
</dbReference>
<dbReference type="GO" id="GO:0006633">
    <property type="term" value="P:fatty acid biosynthetic process"/>
    <property type="evidence" value="ECO:0007669"/>
    <property type="project" value="UniProtKB-UniRule"/>
</dbReference>
<dbReference type="GO" id="GO:0009245">
    <property type="term" value="P:lipid A biosynthetic process"/>
    <property type="evidence" value="ECO:0007669"/>
    <property type="project" value="UniProtKB-UniRule"/>
</dbReference>
<dbReference type="CDD" id="cd01288">
    <property type="entry name" value="FabZ"/>
    <property type="match status" value="1"/>
</dbReference>
<dbReference type="FunFam" id="3.10.129.10:FF:000001">
    <property type="entry name" value="3-hydroxyacyl-[acyl-carrier-protein] dehydratase FabZ"/>
    <property type="match status" value="1"/>
</dbReference>
<dbReference type="Gene3D" id="3.10.129.10">
    <property type="entry name" value="Hotdog Thioesterase"/>
    <property type="match status" value="1"/>
</dbReference>
<dbReference type="HAMAP" id="MF_00406">
    <property type="entry name" value="FabZ"/>
    <property type="match status" value="1"/>
</dbReference>
<dbReference type="InterPro" id="IPR013114">
    <property type="entry name" value="FabA_FabZ"/>
</dbReference>
<dbReference type="InterPro" id="IPR010084">
    <property type="entry name" value="FabZ"/>
</dbReference>
<dbReference type="InterPro" id="IPR029069">
    <property type="entry name" value="HotDog_dom_sf"/>
</dbReference>
<dbReference type="NCBIfam" id="TIGR01750">
    <property type="entry name" value="fabZ"/>
    <property type="match status" value="1"/>
</dbReference>
<dbReference type="NCBIfam" id="NF000582">
    <property type="entry name" value="PRK00006.1"/>
    <property type="match status" value="1"/>
</dbReference>
<dbReference type="PANTHER" id="PTHR30272">
    <property type="entry name" value="3-HYDROXYACYL-[ACYL-CARRIER-PROTEIN] DEHYDRATASE"/>
    <property type="match status" value="1"/>
</dbReference>
<dbReference type="PANTHER" id="PTHR30272:SF1">
    <property type="entry name" value="3-HYDROXYACYL-[ACYL-CARRIER-PROTEIN] DEHYDRATASE"/>
    <property type="match status" value="1"/>
</dbReference>
<dbReference type="Pfam" id="PF07977">
    <property type="entry name" value="FabA"/>
    <property type="match status" value="1"/>
</dbReference>
<dbReference type="SUPFAM" id="SSF54637">
    <property type="entry name" value="Thioesterase/thiol ester dehydrase-isomerase"/>
    <property type="match status" value="1"/>
</dbReference>
<feature type="chain" id="PRO_1000134714" description="3-hydroxyacyl-[acyl-carrier-protein] dehydratase FabZ">
    <location>
        <begin position="1"/>
        <end position="140"/>
    </location>
</feature>
<feature type="active site" evidence="1">
    <location>
        <position position="47"/>
    </location>
</feature>
<reference key="1">
    <citation type="journal article" date="2008" name="J. Bacteriol.">
        <title>Genome sequence of a nephritogenic and highly transformable M49 strain of Streptococcus pyogenes.</title>
        <authorList>
            <person name="McShan W.M."/>
            <person name="Ferretti J.J."/>
            <person name="Karasawa T."/>
            <person name="Suvorov A.N."/>
            <person name="Lin S."/>
            <person name="Qin B."/>
            <person name="Jia H."/>
            <person name="Kenton S."/>
            <person name="Najar F."/>
            <person name="Wu H."/>
            <person name="Scott J."/>
            <person name="Roe B.A."/>
            <person name="Savic D.J."/>
        </authorList>
    </citation>
    <scope>NUCLEOTIDE SEQUENCE [LARGE SCALE GENOMIC DNA]</scope>
    <source>
        <strain>NZ131</strain>
    </source>
</reference>
<protein>
    <recommendedName>
        <fullName evidence="1">3-hydroxyacyl-[acyl-carrier-protein] dehydratase FabZ</fullName>
        <ecNumber evidence="1">4.2.1.59</ecNumber>
    </recommendedName>
    <alternativeName>
        <fullName evidence="1">(3R)-hydroxymyristoyl-[acyl-carrier-protein] dehydratase</fullName>
        <shortName evidence="1">(3R)-hydroxymyristoyl-ACP dehydrase</shortName>
    </alternativeName>
    <alternativeName>
        <fullName evidence="1">Beta-hydroxyacyl-ACP dehydratase</fullName>
    </alternativeName>
</protein>
<gene>
    <name evidence="1" type="primary">fabZ</name>
    <name type="ordered locus">Spy49_1362c</name>
</gene>
<accession>B5XHX8</accession>
<name>FABZ_STRPZ</name>